<dbReference type="EC" id="2.8.1.10" evidence="1"/>
<dbReference type="EMBL" id="CP001138">
    <property type="protein sequence ID" value="ACH48481.1"/>
    <property type="molecule type" value="Genomic_DNA"/>
</dbReference>
<dbReference type="RefSeq" id="WP_000944082.1">
    <property type="nucleotide sequence ID" value="NC_011149.1"/>
</dbReference>
<dbReference type="SMR" id="B5F1H3"/>
<dbReference type="KEGG" id="sea:SeAg_B4403"/>
<dbReference type="HOGENOM" id="CLU_062233_1_0_6"/>
<dbReference type="UniPathway" id="UPA00060"/>
<dbReference type="Proteomes" id="UP000008819">
    <property type="component" value="Chromosome"/>
</dbReference>
<dbReference type="GO" id="GO:0005737">
    <property type="term" value="C:cytoplasm"/>
    <property type="evidence" value="ECO:0007669"/>
    <property type="project" value="UniProtKB-SubCell"/>
</dbReference>
<dbReference type="GO" id="GO:1990107">
    <property type="term" value="F:thiazole synthase activity"/>
    <property type="evidence" value="ECO:0007669"/>
    <property type="project" value="UniProtKB-EC"/>
</dbReference>
<dbReference type="GO" id="GO:0009229">
    <property type="term" value="P:thiamine diphosphate biosynthetic process"/>
    <property type="evidence" value="ECO:0007669"/>
    <property type="project" value="UniProtKB-UniRule"/>
</dbReference>
<dbReference type="CDD" id="cd04728">
    <property type="entry name" value="ThiG"/>
    <property type="match status" value="1"/>
</dbReference>
<dbReference type="FunFam" id="3.20.20.70:FF:000049">
    <property type="entry name" value="Thiazole synthase"/>
    <property type="match status" value="1"/>
</dbReference>
<dbReference type="Gene3D" id="3.20.20.70">
    <property type="entry name" value="Aldolase class I"/>
    <property type="match status" value="1"/>
</dbReference>
<dbReference type="HAMAP" id="MF_00443">
    <property type="entry name" value="ThiG"/>
    <property type="match status" value="1"/>
</dbReference>
<dbReference type="InterPro" id="IPR013785">
    <property type="entry name" value="Aldolase_TIM"/>
</dbReference>
<dbReference type="InterPro" id="IPR033983">
    <property type="entry name" value="Thiazole_synthase_ThiG"/>
</dbReference>
<dbReference type="InterPro" id="IPR008867">
    <property type="entry name" value="ThiG"/>
</dbReference>
<dbReference type="PANTHER" id="PTHR34266">
    <property type="entry name" value="THIAZOLE SYNTHASE"/>
    <property type="match status" value="1"/>
</dbReference>
<dbReference type="PANTHER" id="PTHR34266:SF2">
    <property type="entry name" value="THIAZOLE SYNTHASE"/>
    <property type="match status" value="1"/>
</dbReference>
<dbReference type="Pfam" id="PF05690">
    <property type="entry name" value="ThiG"/>
    <property type="match status" value="1"/>
</dbReference>
<dbReference type="SUPFAM" id="SSF110399">
    <property type="entry name" value="ThiG-like"/>
    <property type="match status" value="1"/>
</dbReference>
<proteinExistence type="inferred from homology"/>
<reference key="1">
    <citation type="journal article" date="2011" name="J. Bacteriol.">
        <title>Comparative genomics of 28 Salmonella enterica isolates: evidence for CRISPR-mediated adaptive sublineage evolution.</title>
        <authorList>
            <person name="Fricke W.F."/>
            <person name="Mammel M.K."/>
            <person name="McDermott P.F."/>
            <person name="Tartera C."/>
            <person name="White D.G."/>
            <person name="Leclerc J.E."/>
            <person name="Ravel J."/>
            <person name="Cebula T.A."/>
        </authorList>
    </citation>
    <scope>NUCLEOTIDE SEQUENCE [LARGE SCALE GENOMIC DNA]</scope>
    <source>
        <strain>SL483</strain>
    </source>
</reference>
<gene>
    <name evidence="1" type="primary">thiG</name>
    <name type="ordered locus">SeAg_B4403</name>
</gene>
<sequence>MLRIADKTFDSHLFTGTGKFASSQLMVEAIRASGSQLVTLAMKRVDLRQHNDAILAPLIEAGVTLLPNTSGAKTAEEAIFAAQLAREALGTNWLKLEIHPDARWLLPDPIETLKAAEALVKQGFVVLPYCGADPVLCKRLEEVGCAAVMPLGAPIGSNQGLETKAMLEIIIQQSTVPVVVDAGIGVPSHATQALEMGADAVLVNTAIAVADDPVMMATAFRLAVEAGVLARQAVPGNRSTYASATSPLTGFLEALA</sequence>
<organism>
    <name type="scientific">Salmonella agona (strain SL483)</name>
    <dbReference type="NCBI Taxonomy" id="454166"/>
    <lineage>
        <taxon>Bacteria</taxon>
        <taxon>Pseudomonadati</taxon>
        <taxon>Pseudomonadota</taxon>
        <taxon>Gammaproteobacteria</taxon>
        <taxon>Enterobacterales</taxon>
        <taxon>Enterobacteriaceae</taxon>
        <taxon>Salmonella</taxon>
    </lineage>
</organism>
<accession>B5F1H3</accession>
<keyword id="KW-0963">Cytoplasm</keyword>
<keyword id="KW-0704">Schiff base</keyword>
<keyword id="KW-0784">Thiamine biosynthesis</keyword>
<keyword id="KW-0808">Transferase</keyword>
<evidence type="ECO:0000255" key="1">
    <source>
        <dbReference type="HAMAP-Rule" id="MF_00443"/>
    </source>
</evidence>
<comment type="function">
    <text evidence="1">Catalyzes the rearrangement of 1-deoxy-D-xylulose 5-phosphate (DXP) to produce the thiazole phosphate moiety of thiamine. Sulfur is provided by the thiocarboxylate moiety of the carrier protein ThiS. In vitro, sulfur can be provided by H(2)S.</text>
</comment>
<comment type="catalytic activity">
    <reaction evidence="1">
        <text>[ThiS sulfur-carrier protein]-C-terminal-Gly-aminoethanethioate + 2-iminoacetate + 1-deoxy-D-xylulose 5-phosphate = [ThiS sulfur-carrier protein]-C-terminal Gly-Gly + 2-[(2R,5Z)-2-carboxy-4-methylthiazol-5(2H)-ylidene]ethyl phosphate + 2 H2O + H(+)</text>
        <dbReference type="Rhea" id="RHEA:26297"/>
        <dbReference type="Rhea" id="RHEA-COMP:12909"/>
        <dbReference type="Rhea" id="RHEA-COMP:19908"/>
        <dbReference type="ChEBI" id="CHEBI:15377"/>
        <dbReference type="ChEBI" id="CHEBI:15378"/>
        <dbReference type="ChEBI" id="CHEBI:57792"/>
        <dbReference type="ChEBI" id="CHEBI:62899"/>
        <dbReference type="ChEBI" id="CHEBI:77846"/>
        <dbReference type="ChEBI" id="CHEBI:90778"/>
        <dbReference type="ChEBI" id="CHEBI:232372"/>
        <dbReference type="EC" id="2.8.1.10"/>
    </reaction>
</comment>
<comment type="pathway">
    <text evidence="1">Cofactor biosynthesis; thiamine diphosphate biosynthesis.</text>
</comment>
<comment type="subunit">
    <text evidence="1">Homotetramer. Forms heterodimers with either ThiH or ThiS.</text>
</comment>
<comment type="subcellular location">
    <subcellularLocation>
        <location evidence="1">Cytoplasm</location>
    </subcellularLocation>
</comment>
<comment type="similarity">
    <text evidence="1">Belongs to the ThiG family.</text>
</comment>
<name>THIG_SALA4</name>
<feature type="chain" id="PRO_1000196892" description="Thiazole synthase">
    <location>
        <begin position="1"/>
        <end position="256"/>
    </location>
</feature>
<feature type="active site" description="Schiff-base intermediate with DXP" evidence="1">
    <location>
        <position position="95"/>
    </location>
</feature>
<feature type="binding site" evidence="1">
    <location>
        <position position="156"/>
    </location>
    <ligand>
        <name>1-deoxy-D-xylulose 5-phosphate</name>
        <dbReference type="ChEBI" id="CHEBI:57792"/>
    </ligand>
</feature>
<feature type="binding site" evidence="1">
    <location>
        <begin position="182"/>
        <end position="183"/>
    </location>
    <ligand>
        <name>1-deoxy-D-xylulose 5-phosphate</name>
        <dbReference type="ChEBI" id="CHEBI:57792"/>
    </ligand>
</feature>
<feature type="binding site" evidence="1">
    <location>
        <begin position="204"/>
        <end position="205"/>
    </location>
    <ligand>
        <name>1-deoxy-D-xylulose 5-phosphate</name>
        <dbReference type="ChEBI" id="CHEBI:57792"/>
    </ligand>
</feature>
<protein>
    <recommendedName>
        <fullName evidence="1">Thiazole synthase</fullName>
        <ecNumber evidence="1">2.8.1.10</ecNumber>
    </recommendedName>
</protein>